<evidence type="ECO:0000255" key="1">
    <source>
        <dbReference type="HAMAP-Rule" id="MF_00469"/>
    </source>
</evidence>
<dbReference type="EC" id="1.14.-.-" evidence="1"/>
<dbReference type="EMBL" id="AM295007">
    <property type="protein sequence ID" value="CAM30416.1"/>
    <property type="molecule type" value="Genomic_DNA"/>
</dbReference>
<dbReference type="RefSeq" id="WP_010922187.1">
    <property type="nucleotide sequence ID" value="NC_009332.1"/>
</dbReference>
<dbReference type="SMR" id="A2REZ0"/>
<dbReference type="KEGG" id="spf:SpyM51090"/>
<dbReference type="HOGENOM" id="CLU_038878_1_0_9"/>
<dbReference type="GO" id="GO:0016705">
    <property type="term" value="F:oxidoreductase activity, acting on paired donors, with incorporation or reduction of molecular oxygen"/>
    <property type="evidence" value="ECO:0007669"/>
    <property type="project" value="UniProtKB-UniRule"/>
</dbReference>
<dbReference type="GO" id="GO:0006400">
    <property type="term" value="P:tRNA modification"/>
    <property type="evidence" value="ECO:0007669"/>
    <property type="project" value="UniProtKB-UniRule"/>
</dbReference>
<dbReference type="CDD" id="cd01518">
    <property type="entry name" value="RHOD_YceA"/>
    <property type="match status" value="1"/>
</dbReference>
<dbReference type="Gene3D" id="3.30.70.100">
    <property type="match status" value="1"/>
</dbReference>
<dbReference type="Gene3D" id="3.40.250.10">
    <property type="entry name" value="Rhodanese-like domain"/>
    <property type="match status" value="1"/>
</dbReference>
<dbReference type="HAMAP" id="MF_00469">
    <property type="entry name" value="TrhO"/>
    <property type="match status" value="1"/>
</dbReference>
<dbReference type="InterPro" id="IPR001763">
    <property type="entry name" value="Rhodanese-like_dom"/>
</dbReference>
<dbReference type="InterPro" id="IPR036873">
    <property type="entry name" value="Rhodanese-like_dom_sf"/>
</dbReference>
<dbReference type="InterPro" id="IPR022111">
    <property type="entry name" value="Rhodanese_C"/>
</dbReference>
<dbReference type="InterPro" id="IPR020936">
    <property type="entry name" value="TrhO"/>
</dbReference>
<dbReference type="InterPro" id="IPR040503">
    <property type="entry name" value="TRHO_N"/>
</dbReference>
<dbReference type="NCBIfam" id="NF001135">
    <property type="entry name" value="PRK00142.1-3"/>
    <property type="match status" value="1"/>
</dbReference>
<dbReference type="NCBIfam" id="NF001137">
    <property type="entry name" value="PRK00142.1-5"/>
    <property type="match status" value="1"/>
</dbReference>
<dbReference type="PANTHER" id="PTHR43268:SF3">
    <property type="entry name" value="RHODANESE-LIKE DOMAIN-CONTAINING PROTEIN 7-RELATED"/>
    <property type="match status" value="1"/>
</dbReference>
<dbReference type="PANTHER" id="PTHR43268">
    <property type="entry name" value="THIOSULFATE SULFURTRANSFERASE/RHODANESE-LIKE DOMAIN-CONTAINING PROTEIN 2"/>
    <property type="match status" value="1"/>
</dbReference>
<dbReference type="Pfam" id="PF00581">
    <property type="entry name" value="Rhodanese"/>
    <property type="match status" value="1"/>
</dbReference>
<dbReference type="Pfam" id="PF12368">
    <property type="entry name" value="Rhodanese_C"/>
    <property type="match status" value="1"/>
</dbReference>
<dbReference type="Pfam" id="PF17773">
    <property type="entry name" value="UPF0176_N"/>
    <property type="match status" value="1"/>
</dbReference>
<dbReference type="SMART" id="SM00450">
    <property type="entry name" value="RHOD"/>
    <property type="match status" value="1"/>
</dbReference>
<dbReference type="SUPFAM" id="SSF52821">
    <property type="entry name" value="Rhodanese/Cell cycle control phosphatase"/>
    <property type="match status" value="1"/>
</dbReference>
<dbReference type="PROSITE" id="PS50206">
    <property type="entry name" value="RHODANESE_3"/>
    <property type="match status" value="1"/>
</dbReference>
<name>TRHO_STRPG</name>
<protein>
    <recommendedName>
        <fullName evidence="1">tRNA uridine(34) hydroxylase</fullName>
        <ecNumber evidence="1">1.14.-.-</ecNumber>
    </recommendedName>
    <alternativeName>
        <fullName evidence="1">tRNA hydroxylation protein O</fullName>
    </alternativeName>
</protein>
<proteinExistence type="inferred from homology"/>
<reference key="1">
    <citation type="journal article" date="2007" name="J. Bacteriol.">
        <title>Complete genome of acute rheumatic fever-associated serotype M5 Streptococcus pyogenes strain Manfredo.</title>
        <authorList>
            <person name="Holden M.T.G."/>
            <person name="Scott A."/>
            <person name="Cherevach I."/>
            <person name="Chillingworth T."/>
            <person name="Churcher C."/>
            <person name="Cronin A."/>
            <person name="Dowd L."/>
            <person name="Feltwell T."/>
            <person name="Hamlin N."/>
            <person name="Holroyd S."/>
            <person name="Jagels K."/>
            <person name="Moule S."/>
            <person name="Mungall K."/>
            <person name="Quail M.A."/>
            <person name="Price C."/>
            <person name="Rabbinowitsch E."/>
            <person name="Sharp S."/>
            <person name="Skelton J."/>
            <person name="Whitehead S."/>
            <person name="Barrell B.G."/>
            <person name="Kehoe M."/>
            <person name="Parkhill J."/>
        </authorList>
    </citation>
    <scope>NUCLEOTIDE SEQUENCE [LARGE SCALE GENOMIC DNA]</scope>
    <source>
        <strain>Manfredo</strain>
    </source>
</reference>
<organism>
    <name type="scientific">Streptococcus pyogenes serotype M5 (strain Manfredo)</name>
    <dbReference type="NCBI Taxonomy" id="160491"/>
    <lineage>
        <taxon>Bacteria</taxon>
        <taxon>Bacillati</taxon>
        <taxon>Bacillota</taxon>
        <taxon>Bacilli</taxon>
        <taxon>Lactobacillales</taxon>
        <taxon>Streptococcaceae</taxon>
        <taxon>Streptococcus</taxon>
    </lineage>
</organism>
<feature type="chain" id="PRO_1000013788" description="tRNA uridine(34) hydroxylase">
    <location>
        <begin position="1"/>
        <end position="328"/>
    </location>
</feature>
<feature type="domain" description="Rhodanese" evidence="1">
    <location>
        <begin position="130"/>
        <end position="224"/>
    </location>
</feature>
<feature type="active site" description="Cysteine persulfide intermediate" evidence="1">
    <location>
        <position position="184"/>
    </location>
</feature>
<comment type="function">
    <text evidence="1">Catalyzes oxygen-dependent 5-hydroxyuridine (ho5U) modification at position 34 in tRNAs.</text>
</comment>
<comment type="catalytic activity">
    <reaction evidence="1">
        <text>uridine(34) in tRNA + AH2 + O2 = 5-hydroxyuridine(34) in tRNA + A + H2O</text>
        <dbReference type="Rhea" id="RHEA:64224"/>
        <dbReference type="Rhea" id="RHEA-COMP:11727"/>
        <dbReference type="Rhea" id="RHEA-COMP:13381"/>
        <dbReference type="ChEBI" id="CHEBI:13193"/>
        <dbReference type="ChEBI" id="CHEBI:15377"/>
        <dbReference type="ChEBI" id="CHEBI:15379"/>
        <dbReference type="ChEBI" id="CHEBI:17499"/>
        <dbReference type="ChEBI" id="CHEBI:65315"/>
        <dbReference type="ChEBI" id="CHEBI:136877"/>
    </reaction>
</comment>
<comment type="similarity">
    <text evidence="1">Belongs to the TrhO family.</text>
</comment>
<keyword id="KW-0560">Oxidoreductase</keyword>
<keyword id="KW-0819">tRNA processing</keyword>
<sequence>MSEKIRVLLYYKYVSIENAQEYAAKHLEFCKSIGLKGRILIADEGINGTVSGDYETTQKYMDWVHSDERFADLWFKIDEENQQAFRKMFVRYKKEIVHLGLEDNNFDSDINPLETTGEYLNPKQFKEALLDEDTVVLDTRNDYEYDLGHFRGAIRPDIRNFRELPQWVRDNKDKFMEKRVVVYCTGGVRCEKFSGWMVREGFKDVGQLHGGIATYGKDPEVQGELWDGAMYVFDDRISVPINHVNPTVISKDYFDGTPCERYVNCANPFCNKQIFASEENETKYVRGCSPECRAHERNRYVQENGLSRQEWAERLEAIGESLPEFVGA</sequence>
<gene>
    <name evidence="1" type="primary">trhO</name>
    <name type="ordered locus">SpyM51090</name>
</gene>
<accession>A2REZ0</accession>